<reference key="1">
    <citation type="submission" date="2004-12" db="EMBL/GenBank/DDBJ databases">
        <title>The genome sequence of Borrelia hermsii and Borrelia turicatae: comparative analysis of two agents of endemic N. America relapsing fever.</title>
        <authorList>
            <person name="Porcella S.F."/>
            <person name="Raffel S.J."/>
            <person name="Schrumpf M.E."/>
            <person name="Montgomery B."/>
            <person name="Smith T."/>
            <person name="Schwan T.G."/>
        </authorList>
    </citation>
    <scope>NUCLEOTIDE SEQUENCE [LARGE SCALE GENOMIC DNA]</scope>
    <source>
        <strain>91E135</strain>
    </source>
</reference>
<accession>A1R037</accession>
<comment type="function">
    <text evidence="1">Probably deamidates glutamine residues to glutamate on methyl-accepting chemotaxis receptors (MCPs), playing an important role in chemotaxis.</text>
</comment>
<comment type="catalytic activity">
    <reaction evidence="1">
        <text>L-glutaminyl-[protein] + H2O = L-glutamyl-[protein] + NH4(+)</text>
        <dbReference type="Rhea" id="RHEA:16441"/>
        <dbReference type="Rhea" id="RHEA-COMP:10207"/>
        <dbReference type="Rhea" id="RHEA-COMP:10208"/>
        <dbReference type="ChEBI" id="CHEBI:15377"/>
        <dbReference type="ChEBI" id="CHEBI:28938"/>
        <dbReference type="ChEBI" id="CHEBI:29973"/>
        <dbReference type="ChEBI" id="CHEBI:30011"/>
        <dbReference type="EC" id="3.5.1.44"/>
    </reaction>
</comment>
<comment type="similarity">
    <text evidence="1">Belongs to the CheD family.</text>
</comment>
<gene>
    <name evidence="1" type="primary">cheD</name>
    <name type="ordered locus">BT0606</name>
</gene>
<name>CHED_BORT9</name>
<protein>
    <recommendedName>
        <fullName evidence="1">Probable chemoreceptor glutamine deamidase CheD</fullName>
        <ecNumber evidence="1">3.5.1.44</ecNumber>
    </recommendedName>
</protein>
<organism>
    <name type="scientific">Borrelia turicatae (strain 91E135)</name>
    <dbReference type="NCBI Taxonomy" id="314724"/>
    <lineage>
        <taxon>Bacteria</taxon>
        <taxon>Pseudomonadati</taxon>
        <taxon>Spirochaetota</taxon>
        <taxon>Spirochaetia</taxon>
        <taxon>Spirochaetales</taxon>
        <taxon>Borreliaceae</taxon>
        <taxon>Borrelia</taxon>
    </lineage>
</organism>
<dbReference type="EC" id="3.5.1.44" evidence="1"/>
<dbReference type="EMBL" id="CP000049">
    <property type="protein sequence ID" value="AAX17929.1"/>
    <property type="molecule type" value="Genomic_DNA"/>
</dbReference>
<dbReference type="RefSeq" id="WP_011772547.1">
    <property type="nucleotide sequence ID" value="NZ_CP073176.1"/>
</dbReference>
<dbReference type="SMR" id="A1R037"/>
<dbReference type="KEGG" id="btu:BT0606"/>
<dbReference type="eggNOG" id="COG1871">
    <property type="taxonomic scope" value="Bacteria"/>
</dbReference>
<dbReference type="HOGENOM" id="CLU_087854_0_0_12"/>
<dbReference type="Proteomes" id="UP000001205">
    <property type="component" value="Chromosome"/>
</dbReference>
<dbReference type="GO" id="GO:0050568">
    <property type="term" value="F:protein-glutamine glutaminase activity"/>
    <property type="evidence" value="ECO:0007669"/>
    <property type="project" value="UniProtKB-UniRule"/>
</dbReference>
<dbReference type="GO" id="GO:0006935">
    <property type="term" value="P:chemotaxis"/>
    <property type="evidence" value="ECO:0007669"/>
    <property type="project" value="UniProtKB-UniRule"/>
</dbReference>
<dbReference type="CDD" id="cd16352">
    <property type="entry name" value="CheD"/>
    <property type="match status" value="1"/>
</dbReference>
<dbReference type="Gene3D" id="3.30.1330.200">
    <property type="match status" value="1"/>
</dbReference>
<dbReference type="HAMAP" id="MF_01440">
    <property type="entry name" value="CheD"/>
    <property type="match status" value="1"/>
</dbReference>
<dbReference type="InterPro" id="IPR038592">
    <property type="entry name" value="CheD-like_sf"/>
</dbReference>
<dbReference type="InterPro" id="IPR005659">
    <property type="entry name" value="Chemorcpt_Glu_NH3ase_CheD"/>
</dbReference>
<dbReference type="InterPro" id="IPR011324">
    <property type="entry name" value="Cytotoxic_necrot_fac-like_cat"/>
</dbReference>
<dbReference type="NCBIfam" id="NF010017">
    <property type="entry name" value="PRK13494.1"/>
    <property type="match status" value="1"/>
</dbReference>
<dbReference type="PANTHER" id="PTHR35147">
    <property type="entry name" value="CHEMORECEPTOR GLUTAMINE DEAMIDASE CHED-RELATED"/>
    <property type="match status" value="1"/>
</dbReference>
<dbReference type="PANTHER" id="PTHR35147:SF2">
    <property type="entry name" value="CHEMORECEPTOR GLUTAMINE DEAMIDASE CHED-RELATED"/>
    <property type="match status" value="1"/>
</dbReference>
<dbReference type="Pfam" id="PF03975">
    <property type="entry name" value="CheD"/>
    <property type="match status" value="1"/>
</dbReference>
<dbReference type="SUPFAM" id="SSF64438">
    <property type="entry name" value="CNF1/YfiH-like putative cysteine hydrolases"/>
    <property type="match status" value="1"/>
</dbReference>
<evidence type="ECO:0000255" key="1">
    <source>
        <dbReference type="HAMAP-Rule" id="MF_01440"/>
    </source>
</evidence>
<proteinExistence type="inferred from homology"/>
<feature type="chain" id="PRO_1000184920" description="Probable chemoreceptor glutamine deamidase CheD">
    <location>
        <begin position="1"/>
        <end position="163"/>
    </location>
</feature>
<keyword id="KW-0145">Chemotaxis</keyword>
<keyword id="KW-0378">Hydrolase</keyword>
<keyword id="KW-1185">Reference proteome</keyword>
<sequence>MLNHFNFKLKRDVTIIVPGEAFVSNDRVISTILGSCVSVVLYDGVRRLIGVNHYVLVKSDSVVDVLQKGRYGVYAIPMLIDAMIENGASKSNLKAKLFGGANFMAKGTIRVGVENSEFAVNSLTKYGIPVVAQDFDQSKSRKIFVFPENFKVVVEYPDGAKIF</sequence>